<proteinExistence type="inferred from homology"/>
<organism>
    <name type="scientific">Lawsonia intracellularis (strain PHE/MN1-00)</name>
    <dbReference type="NCBI Taxonomy" id="363253"/>
    <lineage>
        <taxon>Bacteria</taxon>
        <taxon>Pseudomonadati</taxon>
        <taxon>Thermodesulfobacteriota</taxon>
        <taxon>Desulfovibrionia</taxon>
        <taxon>Desulfovibrionales</taxon>
        <taxon>Desulfovibrionaceae</taxon>
        <taxon>Lawsonia</taxon>
    </lineage>
</organism>
<keyword id="KW-0963">Cytoplasm</keyword>
<keyword id="KW-0312">Gluconeogenesis</keyword>
<keyword id="KW-0324">Glycolysis</keyword>
<keyword id="KW-0413">Isomerase</keyword>
<keyword id="KW-1185">Reference proteome</keyword>
<gene>
    <name evidence="1" type="primary">tpiA</name>
    <name type="ordered locus">LI1132</name>
</gene>
<reference key="1">
    <citation type="submission" date="2005-11" db="EMBL/GenBank/DDBJ databases">
        <title>The complete genome sequence of Lawsonia intracellularis: the causative agent of proliferative enteropathy.</title>
        <authorList>
            <person name="Kaur K."/>
            <person name="Zhang Q."/>
            <person name="Beckler D."/>
            <person name="Munir S."/>
            <person name="Li L."/>
            <person name="Kinsley K."/>
            <person name="Herron L."/>
            <person name="Peterson A."/>
            <person name="May B."/>
            <person name="Singh S."/>
            <person name="Gebhart C."/>
            <person name="Kapur V."/>
        </authorList>
    </citation>
    <scope>NUCLEOTIDE SEQUENCE [LARGE SCALE GENOMIC DNA]</scope>
    <source>
        <strain>PHE/MN1-00</strain>
    </source>
</reference>
<name>TPIS_LAWIP</name>
<comment type="function">
    <text evidence="1">Involved in the gluconeogenesis. Catalyzes stereospecifically the conversion of dihydroxyacetone phosphate (DHAP) to D-glyceraldehyde-3-phosphate (G3P).</text>
</comment>
<comment type="catalytic activity">
    <reaction evidence="1">
        <text>D-glyceraldehyde 3-phosphate = dihydroxyacetone phosphate</text>
        <dbReference type="Rhea" id="RHEA:18585"/>
        <dbReference type="ChEBI" id="CHEBI:57642"/>
        <dbReference type="ChEBI" id="CHEBI:59776"/>
        <dbReference type="EC" id="5.3.1.1"/>
    </reaction>
</comment>
<comment type="pathway">
    <text evidence="1">Carbohydrate biosynthesis; gluconeogenesis.</text>
</comment>
<comment type="pathway">
    <text evidence="1">Carbohydrate degradation; glycolysis; D-glyceraldehyde 3-phosphate from glycerone phosphate: step 1/1.</text>
</comment>
<comment type="subunit">
    <text evidence="1">Homodimer.</text>
</comment>
<comment type="subcellular location">
    <subcellularLocation>
        <location evidence="1">Cytoplasm</location>
    </subcellularLocation>
</comment>
<comment type="similarity">
    <text evidence="1">Belongs to the triosephosphate isomerase family.</text>
</comment>
<sequence length="252" mass="27596">MKILIAANWKMNKNRLEAKDMIEKLMSMPEGIPPQRDIVLFPPFLAIDTIKEKLKNSTIVIGAQNFYPAPSGAFTGEISLEMLKDVGCSWVLIGHSERRHIIGELPTLIEQKTKLALSYGFSIILCIGETAQEREAGLVNSVLEQQLRTSLTDIPSKAISQLVIAYEPVWAIGTGKVASQQDIITAHTLIRKILHNMIGNTSQNIRILYGGSVNSENASSILELDNVNGLLVGGASLQAESFMKIIHAGFSE</sequence>
<dbReference type="EC" id="5.3.1.1" evidence="1"/>
<dbReference type="EMBL" id="AM180252">
    <property type="protein sequence ID" value="CAJ55186.1"/>
    <property type="molecule type" value="Genomic_DNA"/>
</dbReference>
<dbReference type="RefSeq" id="WP_011527215.1">
    <property type="nucleotide sequence ID" value="NC_008011.1"/>
</dbReference>
<dbReference type="SMR" id="Q1MP91"/>
<dbReference type="STRING" id="363253.LI1132"/>
<dbReference type="KEGG" id="lip:LI1132"/>
<dbReference type="eggNOG" id="COG0149">
    <property type="taxonomic scope" value="Bacteria"/>
</dbReference>
<dbReference type="HOGENOM" id="CLU_024251_2_3_7"/>
<dbReference type="OrthoDB" id="9809429at2"/>
<dbReference type="UniPathway" id="UPA00109">
    <property type="reaction ID" value="UER00189"/>
</dbReference>
<dbReference type="UniPathway" id="UPA00138"/>
<dbReference type="Proteomes" id="UP000002430">
    <property type="component" value="Chromosome"/>
</dbReference>
<dbReference type="GO" id="GO:0005829">
    <property type="term" value="C:cytosol"/>
    <property type="evidence" value="ECO:0007669"/>
    <property type="project" value="TreeGrafter"/>
</dbReference>
<dbReference type="GO" id="GO:0004807">
    <property type="term" value="F:triose-phosphate isomerase activity"/>
    <property type="evidence" value="ECO:0007669"/>
    <property type="project" value="UniProtKB-UniRule"/>
</dbReference>
<dbReference type="GO" id="GO:0006094">
    <property type="term" value="P:gluconeogenesis"/>
    <property type="evidence" value="ECO:0007669"/>
    <property type="project" value="UniProtKB-UniRule"/>
</dbReference>
<dbReference type="GO" id="GO:0046166">
    <property type="term" value="P:glyceraldehyde-3-phosphate biosynthetic process"/>
    <property type="evidence" value="ECO:0007669"/>
    <property type="project" value="TreeGrafter"/>
</dbReference>
<dbReference type="GO" id="GO:0019563">
    <property type="term" value="P:glycerol catabolic process"/>
    <property type="evidence" value="ECO:0007669"/>
    <property type="project" value="TreeGrafter"/>
</dbReference>
<dbReference type="GO" id="GO:0006096">
    <property type="term" value="P:glycolytic process"/>
    <property type="evidence" value="ECO:0007669"/>
    <property type="project" value="UniProtKB-UniRule"/>
</dbReference>
<dbReference type="CDD" id="cd00311">
    <property type="entry name" value="TIM"/>
    <property type="match status" value="1"/>
</dbReference>
<dbReference type="FunFam" id="3.20.20.70:FF:000016">
    <property type="entry name" value="Triosephosphate isomerase"/>
    <property type="match status" value="1"/>
</dbReference>
<dbReference type="Gene3D" id="3.20.20.70">
    <property type="entry name" value="Aldolase class I"/>
    <property type="match status" value="1"/>
</dbReference>
<dbReference type="HAMAP" id="MF_00147_B">
    <property type="entry name" value="TIM_B"/>
    <property type="match status" value="1"/>
</dbReference>
<dbReference type="InterPro" id="IPR013785">
    <property type="entry name" value="Aldolase_TIM"/>
</dbReference>
<dbReference type="InterPro" id="IPR035990">
    <property type="entry name" value="TIM_sf"/>
</dbReference>
<dbReference type="InterPro" id="IPR022896">
    <property type="entry name" value="TrioseP_Isoase_bac/euk"/>
</dbReference>
<dbReference type="InterPro" id="IPR000652">
    <property type="entry name" value="Triosephosphate_isomerase"/>
</dbReference>
<dbReference type="InterPro" id="IPR020861">
    <property type="entry name" value="Triosephosphate_isomerase_AS"/>
</dbReference>
<dbReference type="NCBIfam" id="TIGR00419">
    <property type="entry name" value="tim"/>
    <property type="match status" value="1"/>
</dbReference>
<dbReference type="PANTHER" id="PTHR21139">
    <property type="entry name" value="TRIOSEPHOSPHATE ISOMERASE"/>
    <property type="match status" value="1"/>
</dbReference>
<dbReference type="PANTHER" id="PTHR21139:SF42">
    <property type="entry name" value="TRIOSEPHOSPHATE ISOMERASE"/>
    <property type="match status" value="1"/>
</dbReference>
<dbReference type="Pfam" id="PF00121">
    <property type="entry name" value="TIM"/>
    <property type="match status" value="1"/>
</dbReference>
<dbReference type="SUPFAM" id="SSF51351">
    <property type="entry name" value="Triosephosphate isomerase (TIM)"/>
    <property type="match status" value="1"/>
</dbReference>
<dbReference type="PROSITE" id="PS00171">
    <property type="entry name" value="TIM_1"/>
    <property type="match status" value="1"/>
</dbReference>
<dbReference type="PROSITE" id="PS51440">
    <property type="entry name" value="TIM_2"/>
    <property type="match status" value="1"/>
</dbReference>
<evidence type="ECO:0000255" key="1">
    <source>
        <dbReference type="HAMAP-Rule" id="MF_00147"/>
    </source>
</evidence>
<accession>Q1MP91</accession>
<feature type="chain" id="PRO_1000071489" description="Triosephosphate isomerase">
    <location>
        <begin position="1"/>
        <end position="252"/>
    </location>
</feature>
<feature type="active site" description="Electrophile" evidence="1">
    <location>
        <position position="95"/>
    </location>
</feature>
<feature type="active site" description="Proton acceptor" evidence="1">
    <location>
        <position position="167"/>
    </location>
</feature>
<feature type="binding site" evidence="1">
    <location>
        <begin position="8"/>
        <end position="10"/>
    </location>
    <ligand>
        <name>substrate</name>
    </ligand>
</feature>
<feature type="binding site" evidence="1">
    <location>
        <position position="173"/>
    </location>
    <ligand>
        <name>substrate</name>
    </ligand>
</feature>
<feature type="binding site" evidence="1">
    <location>
        <position position="212"/>
    </location>
    <ligand>
        <name>substrate</name>
    </ligand>
</feature>
<feature type="binding site" evidence="1">
    <location>
        <begin position="233"/>
        <end position="234"/>
    </location>
    <ligand>
        <name>substrate</name>
    </ligand>
</feature>
<protein>
    <recommendedName>
        <fullName evidence="1">Triosephosphate isomerase</fullName>
        <shortName evidence="1">TIM</shortName>
        <shortName evidence="1">TPI</shortName>
        <ecNumber evidence="1">5.3.1.1</ecNumber>
    </recommendedName>
    <alternativeName>
        <fullName evidence="1">Triose-phosphate isomerase</fullName>
    </alternativeName>
</protein>